<keyword id="KW-0963">Cytoplasm</keyword>
<keyword id="KW-0418">Kinase</keyword>
<keyword id="KW-0460">Magnesium</keyword>
<keyword id="KW-0479">Metal-binding</keyword>
<keyword id="KW-0598">Phosphotransferase system</keyword>
<keyword id="KW-1185">Reference proteome</keyword>
<keyword id="KW-0762">Sugar transport</keyword>
<keyword id="KW-0808">Transferase</keyword>
<keyword id="KW-0813">Transport</keyword>
<evidence type="ECO:0000250" key="1">
    <source>
        <dbReference type="UniProtKB" id="P08839"/>
    </source>
</evidence>
<evidence type="ECO:0000250" key="2">
    <source>
        <dbReference type="UniProtKB" id="P23533"/>
    </source>
</evidence>
<evidence type="ECO:0000303" key="3">
    <source>
    </source>
</evidence>
<evidence type="ECO:0000305" key="4"/>
<evidence type="ECO:0000305" key="5">
    <source>
    </source>
</evidence>
<gene>
    <name type="primary">ptsI</name>
    <name type="ordered locus">STM2432</name>
</gene>
<proteinExistence type="evidence at protein level"/>
<sequence>MISGILASPGIAFGKALLLKEDEIVIDRKKISADKVDQEVERFLSGRAKASAQLEAIKTKAGETFGEEKEAIFEGHIMLLEDEELEQEIIALIKDKHMTADAAAHEVIEGQATALEELDDEYLKERAADVRDIGKRLLRNILGLAIIDLSAIQEEVILVAADLTPSETAQLNLQKVLGFITDAGGRTSHTSIMARSLELPAIVGTGSVTAQVKNGDYLILDAVNNQVYVNPTNDVIEQLRAVQEQVATEKAELAKLKDLPAITLDGHQVEVCANIGTVRDVEGAERNGAEGVGLYRTEFLFMDRDALPTEEEQFAAYKAVAEACGSQAVIVRTMDIGGDKELPYMNFPKEENPFLGWRAVRIAMDRKEILRDQVRAILRASAFGKLRIMFPMIISVEEVRALRKEIEIYKQELRDEGKAFDESIEIGVMVETPAAATIARHLAKEVDFFSIGTNDLTQYTLAVDRGNDMISHLYQPMSPSVLNLIKQVIDASHAEGKWTGMCGELAGDERATLLLLGMGLDEFSMSAISIPRIKKIIRNTNFEDAKVLAEQALAQPTTDELMTLVNKFIEEKTIC</sequence>
<name>PT1_SALTY</name>
<dbReference type="EC" id="2.7.3.9" evidence="1 5"/>
<dbReference type="EMBL" id="M76176">
    <property type="protein sequence ID" value="AAA27060.1"/>
    <property type="molecule type" value="Genomic_DNA"/>
</dbReference>
<dbReference type="EMBL" id="AE006468">
    <property type="protein sequence ID" value="AAL21326.1"/>
    <property type="molecule type" value="Genomic_DNA"/>
</dbReference>
<dbReference type="EMBL" id="M21450">
    <property type="protein sequence ID" value="AAA27053.1"/>
    <property type="molecule type" value="Genomic_DNA"/>
</dbReference>
<dbReference type="EMBL" id="X14737">
    <property type="protein sequence ID" value="CAA32867.1"/>
    <property type="molecule type" value="Genomic_DNA"/>
</dbReference>
<dbReference type="PIR" id="A41027">
    <property type="entry name" value="WQEBPI"/>
</dbReference>
<dbReference type="RefSeq" id="NP_461367.1">
    <property type="nucleotide sequence ID" value="NC_003197.2"/>
</dbReference>
<dbReference type="RefSeq" id="WP_000623114.1">
    <property type="nucleotide sequence ID" value="NC_003197.2"/>
</dbReference>
<dbReference type="BMRB" id="P0A249"/>
<dbReference type="SMR" id="P0A249"/>
<dbReference type="STRING" id="99287.STM2432"/>
<dbReference type="PaxDb" id="99287-STM2432"/>
<dbReference type="GeneID" id="1253954"/>
<dbReference type="KEGG" id="stm:STM2432"/>
<dbReference type="PATRIC" id="fig|99287.12.peg.2570"/>
<dbReference type="HOGENOM" id="CLU_007308_7_0_6"/>
<dbReference type="OMA" id="RMFANDH"/>
<dbReference type="PhylomeDB" id="P0A249"/>
<dbReference type="BioCyc" id="SENT99287:STM2432-MONOMER"/>
<dbReference type="BRENDA" id="2.7.3.9">
    <property type="organism ID" value="5542"/>
</dbReference>
<dbReference type="SABIO-RK" id="P0A249"/>
<dbReference type="Proteomes" id="UP000001014">
    <property type="component" value="Chromosome"/>
</dbReference>
<dbReference type="GO" id="GO:0005737">
    <property type="term" value="C:cytoplasm"/>
    <property type="evidence" value="ECO:0007669"/>
    <property type="project" value="UniProtKB-SubCell"/>
</dbReference>
<dbReference type="GO" id="GO:0016301">
    <property type="term" value="F:kinase activity"/>
    <property type="evidence" value="ECO:0007669"/>
    <property type="project" value="UniProtKB-KW"/>
</dbReference>
<dbReference type="GO" id="GO:0046872">
    <property type="term" value="F:metal ion binding"/>
    <property type="evidence" value="ECO:0007669"/>
    <property type="project" value="UniProtKB-KW"/>
</dbReference>
<dbReference type="GO" id="GO:0008965">
    <property type="term" value="F:phosphoenolpyruvate-protein phosphotransferase activity"/>
    <property type="evidence" value="ECO:0000318"/>
    <property type="project" value="GO_Central"/>
</dbReference>
<dbReference type="GO" id="GO:0015764">
    <property type="term" value="P:N-acetylglucosamine transport"/>
    <property type="evidence" value="ECO:0000318"/>
    <property type="project" value="GO_Central"/>
</dbReference>
<dbReference type="GO" id="GO:0009401">
    <property type="term" value="P:phosphoenolpyruvate-dependent sugar phosphotransferase system"/>
    <property type="evidence" value="ECO:0007669"/>
    <property type="project" value="UniProtKB-KW"/>
</dbReference>
<dbReference type="FunFam" id="1.10.274.10:FF:000001">
    <property type="entry name" value="Phosphoenolpyruvate-protein phosphotransferase"/>
    <property type="match status" value="1"/>
</dbReference>
<dbReference type="FunFam" id="3.20.20.60:FF:000007">
    <property type="entry name" value="Phosphoenolpyruvate-protein phosphotransferase"/>
    <property type="match status" value="1"/>
</dbReference>
<dbReference type="FunFam" id="3.50.30.10:FF:000001">
    <property type="entry name" value="Phosphoenolpyruvate-protein phosphotransferase"/>
    <property type="match status" value="1"/>
</dbReference>
<dbReference type="Gene3D" id="3.20.20.60">
    <property type="entry name" value="Phosphoenolpyruvate-binding domains"/>
    <property type="match status" value="1"/>
</dbReference>
<dbReference type="Gene3D" id="3.50.30.10">
    <property type="entry name" value="Phosphohistidine domain"/>
    <property type="match status" value="1"/>
</dbReference>
<dbReference type="Gene3D" id="1.10.274.10">
    <property type="entry name" value="PtsI, HPr-binding domain"/>
    <property type="match status" value="1"/>
</dbReference>
<dbReference type="InterPro" id="IPR008279">
    <property type="entry name" value="PEP-util_enz_mobile_dom"/>
</dbReference>
<dbReference type="InterPro" id="IPR050499">
    <property type="entry name" value="PEP-utilizing_PTS_enzyme"/>
</dbReference>
<dbReference type="InterPro" id="IPR018274">
    <property type="entry name" value="PEP_util_AS"/>
</dbReference>
<dbReference type="InterPro" id="IPR000121">
    <property type="entry name" value="PEP_util_C"/>
</dbReference>
<dbReference type="InterPro" id="IPR023151">
    <property type="entry name" value="PEP_util_CS"/>
</dbReference>
<dbReference type="InterPro" id="IPR036637">
    <property type="entry name" value="Phosphohistidine_dom_sf"/>
</dbReference>
<dbReference type="InterPro" id="IPR024692">
    <property type="entry name" value="PTS_EI"/>
</dbReference>
<dbReference type="InterPro" id="IPR006318">
    <property type="entry name" value="PTS_EI-like"/>
</dbReference>
<dbReference type="InterPro" id="IPR008731">
    <property type="entry name" value="PTS_EIN"/>
</dbReference>
<dbReference type="InterPro" id="IPR036618">
    <property type="entry name" value="PtsI_HPr-bd_sf"/>
</dbReference>
<dbReference type="InterPro" id="IPR015813">
    <property type="entry name" value="Pyrv/PenolPyrv_kinase-like_dom"/>
</dbReference>
<dbReference type="InterPro" id="IPR040442">
    <property type="entry name" value="Pyrv_kinase-like_dom_sf"/>
</dbReference>
<dbReference type="NCBIfam" id="NF008382">
    <property type="entry name" value="PRK11177.1"/>
    <property type="match status" value="1"/>
</dbReference>
<dbReference type="NCBIfam" id="TIGR01417">
    <property type="entry name" value="PTS_I_fam"/>
    <property type="match status" value="1"/>
</dbReference>
<dbReference type="PANTHER" id="PTHR46244">
    <property type="entry name" value="PHOSPHOENOLPYRUVATE-PROTEIN PHOSPHOTRANSFERASE"/>
    <property type="match status" value="1"/>
</dbReference>
<dbReference type="PANTHER" id="PTHR46244:SF6">
    <property type="entry name" value="PHOSPHOENOLPYRUVATE-PROTEIN PHOSPHOTRANSFERASE"/>
    <property type="match status" value="1"/>
</dbReference>
<dbReference type="Pfam" id="PF05524">
    <property type="entry name" value="PEP-utilisers_N"/>
    <property type="match status" value="1"/>
</dbReference>
<dbReference type="Pfam" id="PF00391">
    <property type="entry name" value="PEP-utilizers"/>
    <property type="match status" value="1"/>
</dbReference>
<dbReference type="Pfam" id="PF02896">
    <property type="entry name" value="PEP-utilizers_C"/>
    <property type="match status" value="1"/>
</dbReference>
<dbReference type="PIRSF" id="PIRSF000732">
    <property type="entry name" value="PTS_enzyme_I"/>
    <property type="match status" value="1"/>
</dbReference>
<dbReference type="PRINTS" id="PR01736">
    <property type="entry name" value="PHPHTRNFRASE"/>
</dbReference>
<dbReference type="SUPFAM" id="SSF47831">
    <property type="entry name" value="Enzyme I of the PEP:sugar phosphotransferase system HPr-binding (sub)domain"/>
    <property type="match status" value="1"/>
</dbReference>
<dbReference type="SUPFAM" id="SSF51621">
    <property type="entry name" value="Phosphoenolpyruvate/pyruvate domain"/>
    <property type="match status" value="1"/>
</dbReference>
<dbReference type="SUPFAM" id="SSF52009">
    <property type="entry name" value="Phosphohistidine domain"/>
    <property type="match status" value="1"/>
</dbReference>
<dbReference type="PROSITE" id="PS00742">
    <property type="entry name" value="PEP_ENZYMES_2"/>
    <property type="match status" value="1"/>
</dbReference>
<dbReference type="PROSITE" id="PS00370">
    <property type="entry name" value="PEP_ENZYMES_PHOS_SITE"/>
    <property type="match status" value="1"/>
</dbReference>
<feature type="chain" id="PRO_0000147079" description="Phosphoenolpyruvate-protein phosphotransferase">
    <location>
        <begin position="1"/>
        <end position="575"/>
    </location>
</feature>
<feature type="active site" description="Tele-phosphohistidine intermediate" evidence="1 5">
    <location>
        <position position="189"/>
    </location>
</feature>
<feature type="active site" description="Proton donor" evidence="1">
    <location>
        <position position="502"/>
    </location>
</feature>
<feature type="binding site" evidence="2">
    <location>
        <position position="296"/>
    </location>
    <ligand>
        <name>phosphoenolpyruvate</name>
        <dbReference type="ChEBI" id="CHEBI:58702"/>
    </ligand>
</feature>
<feature type="binding site" evidence="1">
    <location>
        <position position="332"/>
    </location>
    <ligand>
        <name>phosphoenolpyruvate</name>
        <dbReference type="ChEBI" id="CHEBI:58702"/>
    </ligand>
</feature>
<feature type="binding site" evidence="1">
    <location>
        <position position="431"/>
    </location>
    <ligand>
        <name>Mg(2+)</name>
        <dbReference type="ChEBI" id="CHEBI:18420"/>
    </ligand>
</feature>
<feature type="binding site" evidence="1">
    <location>
        <begin position="454"/>
        <end position="455"/>
    </location>
    <ligand>
        <name>phosphoenolpyruvate</name>
        <dbReference type="ChEBI" id="CHEBI:58702"/>
    </ligand>
</feature>
<feature type="binding site" evidence="1">
    <location>
        <position position="455"/>
    </location>
    <ligand>
        <name>Mg(2+)</name>
        <dbReference type="ChEBI" id="CHEBI:18420"/>
    </ligand>
</feature>
<feature type="binding site" evidence="2">
    <location>
        <position position="465"/>
    </location>
    <ligand>
        <name>phosphoenolpyruvate</name>
        <dbReference type="ChEBI" id="CHEBI:58702"/>
    </ligand>
</feature>
<comment type="function">
    <text evidence="1 5">General (non sugar-specific) component of the phosphoenolpyruvate-dependent sugar phosphotransferase system (sugar PTS). This major carbohydrate active-transport system catalyzes the phosphorylation of incoming sugar substrates concomitantly with their translocation across the cell membrane. Enzyme I transfers the phosphoryl group from phosphoenolpyruvate (PEP) to the phosphoryl carrier protein (HPr).</text>
</comment>
<comment type="catalytic activity">
    <reaction evidence="1 5">
        <text>L-histidyl-[protein] + phosphoenolpyruvate = N(pros)-phospho-L-histidyl-[protein] + pyruvate</text>
        <dbReference type="Rhea" id="RHEA:23880"/>
        <dbReference type="Rhea" id="RHEA-COMP:9745"/>
        <dbReference type="Rhea" id="RHEA-COMP:9746"/>
        <dbReference type="ChEBI" id="CHEBI:15361"/>
        <dbReference type="ChEBI" id="CHEBI:29979"/>
        <dbReference type="ChEBI" id="CHEBI:58702"/>
        <dbReference type="ChEBI" id="CHEBI:64837"/>
        <dbReference type="EC" id="2.7.3.9"/>
    </reaction>
</comment>
<comment type="cofactor">
    <cofactor evidence="1">
        <name>Mg(2+)</name>
        <dbReference type="ChEBI" id="CHEBI:18420"/>
    </cofactor>
</comment>
<comment type="subunit">
    <text evidence="1">Homodimer.</text>
</comment>
<comment type="subcellular location">
    <subcellularLocation>
        <location evidence="4">Cytoplasm</location>
    </subcellularLocation>
</comment>
<comment type="domain">
    <text evidence="1">The N-terminal domain contains the HPr binding site, the central domain the pyrophosphate/phosphate carrier histidine, and the C-terminal domain the pyruvate binding site.</text>
</comment>
<comment type="miscellaneous">
    <text evidence="1">The reaction takes place in three steps, mediated by a phosphocarrier histidine residue located on the surface of the central domain. The two first partial reactions are catalyzed at an active site located on the N-terminal domain, and the third partial reaction is catalyzed at an active site located on the C-terminal domain. For catalytic turnover, the central domain swivels from the concave surface of the N-terminal domain to that of the C-terminal domain.</text>
</comment>
<comment type="similarity">
    <text evidence="4">Belongs to the PEP-utilizing enzyme family.</text>
</comment>
<accession>P0A249</accession>
<accession>P12654</accession>
<reference key="1">
    <citation type="journal article" date="1991" name="J. Biol. Chem.">
        <title>Sugar transport by the bacterial phosphotransferase system. Structural and thermodynamic domains of enzyme I of Salmonella typhimurium.</title>
        <authorList>
            <person name="Licalsi C."/>
            <person name="Crocenzi T.S."/>
            <person name="Freire E."/>
            <person name="Roseman S."/>
        </authorList>
    </citation>
    <scope>NUCLEOTIDE SEQUENCE [GENOMIC DNA]</scope>
    <scope>FUNCTION</scope>
    <scope>CATALYTIC ACTIVITY</scope>
    <scope>ACTIVE SITE</scope>
</reference>
<reference key="2">
    <citation type="journal article" date="2001" name="Nature">
        <title>Complete genome sequence of Salmonella enterica serovar Typhimurium LT2.</title>
        <authorList>
            <person name="McClelland M."/>
            <person name="Sanderson K.E."/>
            <person name="Spieth J."/>
            <person name="Clifton S.W."/>
            <person name="Latreille P."/>
            <person name="Courtney L."/>
            <person name="Porwollik S."/>
            <person name="Ali J."/>
            <person name="Dante M."/>
            <person name="Du F."/>
            <person name="Hou S."/>
            <person name="Layman D."/>
            <person name="Leonard S."/>
            <person name="Nguyen C."/>
            <person name="Scott K."/>
            <person name="Holmes A."/>
            <person name="Grewal N."/>
            <person name="Mulvaney E."/>
            <person name="Ryan E."/>
            <person name="Sun H."/>
            <person name="Florea L."/>
            <person name="Miller W."/>
            <person name="Stoneking T."/>
            <person name="Nhan M."/>
            <person name="Waterston R."/>
            <person name="Wilson R.K."/>
        </authorList>
    </citation>
    <scope>NUCLEOTIDE SEQUENCE [LARGE SCALE GENOMIC DNA]</scope>
    <source>
        <strain>LT2 / SGSC1412 / ATCC 700720</strain>
    </source>
</reference>
<reference key="3">
    <citation type="journal article" date="1988" name="J. Bacteriol.">
        <title>DNA sequences of the cysK regions of Salmonella typhimurium and Escherichia coli and linkage of the cysK regions to ptsH.</title>
        <authorList>
            <person name="Byrne C.R."/>
            <person name="Monroe R.S."/>
            <person name="Ward K.A."/>
            <person name="Kredich N.M."/>
        </authorList>
    </citation>
    <scope>NUCLEOTIDE SEQUENCE [GENOMIC DNA] OF 1-299</scope>
    <source>
        <strain>LT2 / SGSC1412 / ATCC 700720</strain>
    </source>
</reference>
<reference key="4">
    <citation type="journal article" date="1989" name="Mol. Microbiol.">
        <title>Partial nucleotide sequence of the pts operon in Salmonella typhimurium: comparative analyses in five bacterial genera.</title>
        <authorList>
            <person name="Schnierow B.J."/>
            <person name="Yamada M."/>
            <person name="Saier M.H. Jr."/>
        </authorList>
    </citation>
    <scope>NUCLEOTIDE SEQUENCE [GENOMIC DNA] OF 1-9</scope>
    <source>
        <strain>LT2 / SGSC1412 / ATCC 700720</strain>
    </source>
</reference>
<protein>
    <recommendedName>
        <fullName evidence="3">Phosphoenolpyruvate-protein phosphotransferase</fullName>
        <ecNumber evidence="1 5">2.7.3.9</ecNumber>
    </recommendedName>
    <alternativeName>
        <fullName evidence="3">Phosphotransferase system, enzyme I</fullName>
    </alternativeName>
</protein>
<organism>
    <name type="scientific">Salmonella typhimurium (strain LT2 / SGSC1412 / ATCC 700720)</name>
    <dbReference type="NCBI Taxonomy" id="99287"/>
    <lineage>
        <taxon>Bacteria</taxon>
        <taxon>Pseudomonadati</taxon>
        <taxon>Pseudomonadota</taxon>
        <taxon>Gammaproteobacteria</taxon>
        <taxon>Enterobacterales</taxon>
        <taxon>Enterobacteriaceae</taxon>
        <taxon>Salmonella</taxon>
    </lineage>
</organism>